<proteinExistence type="inferred from homology"/>
<gene>
    <name evidence="1" type="primary">petB</name>
</gene>
<evidence type="ECO:0000255" key="1">
    <source>
        <dbReference type="HAMAP-Rule" id="MF_00633"/>
    </source>
</evidence>
<comment type="function">
    <text evidence="1">Component of the cytochrome b6-f complex, which mediates electron transfer between photosystem II (PSII) and photosystem I (PSI), cyclic electron flow around PSI, and state transitions.</text>
</comment>
<comment type="cofactor">
    <cofactor evidence="1">
        <name>heme b</name>
        <dbReference type="ChEBI" id="CHEBI:60344"/>
    </cofactor>
    <text evidence="1">Binds 2 heme b groups non-covalently with two histidine residues as axial ligands.</text>
</comment>
<comment type="cofactor">
    <cofactor evidence="1">
        <name>heme c</name>
        <dbReference type="ChEBI" id="CHEBI:61717"/>
    </cofactor>
    <text evidence="1">Binds one heme group covalently by a single cysteine link with no axial amino acid ligand. This heme was named heme ci.</text>
</comment>
<comment type="subunit">
    <text evidence="1">The 4 large subunits of the cytochrome b6-f complex are cytochrome b6, subunit IV (17 kDa polypeptide, PetD), cytochrome f and the Rieske protein, while the 4 small subunits are PetG, PetL, PetM and PetN. The complex functions as a dimer.</text>
</comment>
<comment type="subcellular location">
    <subcellularLocation>
        <location evidence="1">Plastid</location>
        <location evidence="1">Chloroplast thylakoid membrane</location>
        <topology evidence="1">Multi-pass membrane protein</topology>
    </subcellularLocation>
</comment>
<comment type="miscellaneous">
    <text evidence="1">Heme 1 (or BH or b566) is high-potential and absorbs at about 566 nm, and heme 2 (or BL or b562) is low-potential and absorbs at about 562 nm.</text>
</comment>
<comment type="similarity">
    <text evidence="1">Belongs to the cytochrome b family. PetB subfamily.</text>
</comment>
<geneLocation type="chloroplast"/>
<reference key="1">
    <citation type="journal article" date="1997" name="Proc. Natl. Acad. Sci. U.S.A.">
        <title>Complete nucleotide sequence of the chloroplast genome from the green alga Chlorella vulgaris: the existence of genes possibly involved in chloroplast division.</title>
        <authorList>
            <person name="Wakasugi T."/>
            <person name="Nagai T."/>
            <person name="Kapoor M."/>
            <person name="Sugita M."/>
            <person name="Ito M."/>
            <person name="Ito S."/>
            <person name="Tsudzuki J."/>
            <person name="Nakashima K."/>
            <person name="Tsudzuki T."/>
            <person name="Suzuki Y."/>
            <person name="Hamada A."/>
            <person name="Ohta T."/>
            <person name="Inamura A."/>
            <person name="Yoshinaga K."/>
            <person name="Sugiura M."/>
        </authorList>
    </citation>
    <scope>NUCLEOTIDE SEQUENCE [LARGE SCALE GENOMIC DNA]</scope>
    <source>
        <strain>IAM C-27 / Tamiya</strain>
    </source>
</reference>
<dbReference type="EMBL" id="AB001684">
    <property type="protein sequence ID" value="BAA57914.1"/>
    <property type="molecule type" value="Genomic_DNA"/>
</dbReference>
<dbReference type="PIR" id="T07266">
    <property type="entry name" value="T07266"/>
</dbReference>
<dbReference type="RefSeq" id="NP_045838.1">
    <property type="nucleotide sequence ID" value="NC_001865.1"/>
</dbReference>
<dbReference type="SMR" id="P56321"/>
<dbReference type="GeneID" id="809116"/>
<dbReference type="OrthoDB" id="1663482at2759"/>
<dbReference type="GO" id="GO:0009535">
    <property type="term" value="C:chloroplast thylakoid membrane"/>
    <property type="evidence" value="ECO:0007669"/>
    <property type="project" value="UniProtKB-SubCell"/>
</dbReference>
<dbReference type="GO" id="GO:0045158">
    <property type="term" value="F:electron transporter, transferring electrons within cytochrome b6/f complex of photosystem II activity"/>
    <property type="evidence" value="ECO:0007669"/>
    <property type="project" value="UniProtKB-UniRule"/>
</dbReference>
<dbReference type="GO" id="GO:0046872">
    <property type="term" value="F:metal ion binding"/>
    <property type="evidence" value="ECO:0007669"/>
    <property type="project" value="UniProtKB-KW"/>
</dbReference>
<dbReference type="GO" id="GO:0016491">
    <property type="term" value="F:oxidoreductase activity"/>
    <property type="evidence" value="ECO:0007669"/>
    <property type="project" value="InterPro"/>
</dbReference>
<dbReference type="GO" id="GO:0015979">
    <property type="term" value="P:photosynthesis"/>
    <property type="evidence" value="ECO:0007669"/>
    <property type="project" value="UniProtKB-UniRule"/>
</dbReference>
<dbReference type="GO" id="GO:0022904">
    <property type="term" value="P:respiratory electron transport chain"/>
    <property type="evidence" value="ECO:0007669"/>
    <property type="project" value="InterPro"/>
</dbReference>
<dbReference type="CDD" id="cd00284">
    <property type="entry name" value="Cytochrome_b_N"/>
    <property type="match status" value="1"/>
</dbReference>
<dbReference type="FunFam" id="1.20.810.10:FF:000001">
    <property type="entry name" value="Cytochrome b6"/>
    <property type="match status" value="1"/>
</dbReference>
<dbReference type="Gene3D" id="1.20.810.10">
    <property type="entry name" value="Cytochrome Bc1 Complex, Chain C"/>
    <property type="match status" value="1"/>
</dbReference>
<dbReference type="HAMAP" id="MF_00633">
    <property type="entry name" value="Cytb6_f_cytb6"/>
    <property type="match status" value="1"/>
</dbReference>
<dbReference type="InterPro" id="IPR005797">
    <property type="entry name" value="Cyt_b/b6_N"/>
</dbReference>
<dbReference type="InterPro" id="IPR023530">
    <property type="entry name" value="Cyt_B6_PetB"/>
</dbReference>
<dbReference type="InterPro" id="IPR027387">
    <property type="entry name" value="Cytb/b6-like_sf"/>
</dbReference>
<dbReference type="InterPro" id="IPR048259">
    <property type="entry name" value="Cytochrome_b_N_euk/bac"/>
</dbReference>
<dbReference type="InterPro" id="IPR016174">
    <property type="entry name" value="Di-haem_cyt_TM"/>
</dbReference>
<dbReference type="NCBIfam" id="NF002990">
    <property type="entry name" value="PRK03735.1"/>
    <property type="match status" value="1"/>
</dbReference>
<dbReference type="PANTHER" id="PTHR19271">
    <property type="entry name" value="CYTOCHROME B"/>
    <property type="match status" value="1"/>
</dbReference>
<dbReference type="PANTHER" id="PTHR19271:SF16">
    <property type="entry name" value="CYTOCHROME B"/>
    <property type="match status" value="1"/>
</dbReference>
<dbReference type="Pfam" id="PF00033">
    <property type="entry name" value="Cytochrome_B"/>
    <property type="match status" value="1"/>
</dbReference>
<dbReference type="PIRSF" id="PIRSF000032">
    <property type="entry name" value="Cytochrome_b6"/>
    <property type="match status" value="1"/>
</dbReference>
<dbReference type="SUPFAM" id="SSF81342">
    <property type="entry name" value="Transmembrane di-heme cytochromes"/>
    <property type="match status" value="1"/>
</dbReference>
<dbReference type="PROSITE" id="PS51002">
    <property type="entry name" value="CYTB_NTER"/>
    <property type="match status" value="1"/>
</dbReference>
<accession>P56321</accession>
<feature type="chain" id="PRO_0000061788" description="Cytochrome b6">
    <location>
        <begin position="1"/>
        <end position="215"/>
    </location>
</feature>
<feature type="transmembrane region" description="Helical" evidence="1">
    <location>
        <begin position="32"/>
        <end position="52"/>
    </location>
</feature>
<feature type="transmembrane region" description="Helical" evidence="1">
    <location>
        <begin position="90"/>
        <end position="110"/>
    </location>
</feature>
<feature type="transmembrane region" description="Helical" evidence="1">
    <location>
        <begin position="116"/>
        <end position="136"/>
    </location>
</feature>
<feature type="transmembrane region" description="Helical" evidence="1">
    <location>
        <begin position="186"/>
        <end position="206"/>
    </location>
</feature>
<feature type="binding site" description="covalent" evidence="1">
    <location>
        <position position="35"/>
    </location>
    <ligand>
        <name>heme c</name>
        <dbReference type="ChEBI" id="CHEBI:61717"/>
    </ligand>
</feature>
<feature type="binding site" description="axial binding residue" evidence="1">
    <location>
        <position position="86"/>
    </location>
    <ligand>
        <name>heme b</name>
        <dbReference type="ChEBI" id="CHEBI:60344"/>
        <label>2</label>
    </ligand>
    <ligandPart>
        <name>Fe</name>
        <dbReference type="ChEBI" id="CHEBI:18248"/>
    </ligandPart>
</feature>
<feature type="binding site" description="axial binding residue" evidence="1">
    <location>
        <position position="100"/>
    </location>
    <ligand>
        <name>heme b</name>
        <dbReference type="ChEBI" id="CHEBI:60344"/>
        <label>1</label>
    </ligand>
    <ligandPart>
        <name>Fe</name>
        <dbReference type="ChEBI" id="CHEBI:18248"/>
    </ligandPart>
</feature>
<feature type="binding site" description="axial binding residue" evidence="1">
    <location>
        <position position="187"/>
    </location>
    <ligand>
        <name>heme b</name>
        <dbReference type="ChEBI" id="CHEBI:60344"/>
        <label>2</label>
    </ligand>
    <ligandPart>
        <name>Fe</name>
        <dbReference type="ChEBI" id="CHEBI:18248"/>
    </ligandPart>
</feature>
<feature type="binding site" description="axial binding residue" evidence="1">
    <location>
        <position position="202"/>
    </location>
    <ligand>
        <name>heme b</name>
        <dbReference type="ChEBI" id="CHEBI:60344"/>
        <label>1</label>
    </ligand>
    <ligandPart>
        <name>Fe</name>
        <dbReference type="ChEBI" id="CHEBI:18248"/>
    </ligandPart>
</feature>
<protein>
    <recommendedName>
        <fullName evidence="1">Cytochrome b6</fullName>
    </recommendedName>
</protein>
<sequence>MGKVYDWFEERLEIQSIADDISSKYVPPHVNIFYCIGGITFTCFLVQVATGFAMTFYYRPTVAEAFASVQYIMTEVNFGWLIRSIHRWSASMMVLMMILHVCRVYLTGGFKKPRELTWVTGVIMAVCTVSFGVTGYSLPWDQIGYWAVKIVTGVPDAIPVVGPALVELLRGGVGVGQSTLTRFYSLHTFVLPLATAVFMLMHFLMIRKQGISGPL</sequence>
<organism>
    <name type="scientific">Chlorella vulgaris</name>
    <name type="common">Green alga</name>
    <dbReference type="NCBI Taxonomy" id="3077"/>
    <lineage>
        <taxon>Eukaryota</taxon>
        <taxon>Viridiplantae</taxon>
        <taxon>Chlorophyta</taxon>
        <taxon>core chlorophytes</taxon>
        <taxon>Trebouxiophyceae</taxon>
        <taxon>Chlorellales</taxon>
        <taxon>Chlorellaceae</taxon>
        <taxon>Chlorella clade</taxon>
        <taxon>Chlorella</taxon>
    </lineage>
</organism>
<name>CYB6_CHLVU</name>
<keyword id="KW-0150">Chloroplast</keyword>
<keyword id="KW-0249">Electron transport</keyword>
<keyword id="KW-0349">Heme</keyword>
<keyword id="KW-0408">Iron</keyword>
<keyword id="KW-0472">Membrane</keyword>
<keyword id="KW-0479">Metal-binding</keyword>
<keyword id="KW-0602">Photosynthesis</keyword>
<keyword id="KW-0934">Plastid</keyword>
<keyword id="KW-0793">Thylakoid</keyword>
<keyword id="KW-0812">Transmembrane</keyword>
<keyword id="KW-1133">Transmembrane helix</keyword>
<keyword id="KW-0813">Transport</keyword>